<gene>
    <name evidence="1" type="primary">fabH</name>
    <name type="ordered locus">BMASAVP1_A2479</name>
</gene>
<reference key="1">
    <citation type="journal article" date="2010" name="Genome Biol. Evol.">
        <title>Continuing evolution of Burkholderia mallei through genome reduction and large-scale rearrangements.</title>
        <authorList>
            <person name="Losada L."/>
            <person name="Ronning C.M."/>
            <person name="DeShazer D."/>
            <person name="Woods D."/>
            <person name="Fedorova N."/>
            <person name="Kim H.S."/>
            <person name="Shabalina S.A."/>
            <person name="Pearson T.R."/>
            <person name="Brinkac L."/>
            <person name="Tan P."/>
            <person name="Nandi T."/>
            <person name="Crabtree J."/>
            <person name="Badger J."/>
            <person name="Beckstrom-Sternberg S."/>
            <person name="Saqib M."/>
            <person name="Schutzer S.E."/>
            <person name="Keim P."/>
            <person name="Nierman W.C."/>
        </authorList>
    </citation>
    <scope>NUCLEOTIDE SEQUENCE [LARGE SCALE GENOMIC DNA]</scope>
    <source>
        <strain>SAVP1</strain>
    </source>
</reference>
<accession>A1V6D0</accession>
<sequence length="329" mass="34823">MAQSTLYSRVLGTGSYLPPDRVTNQELADRLAKDGIETSDEWIVARTGIRARHFAAPDVTTSDLALVAAQRAIEAADVDPQSIDLIIVATSTPDFVFPSTACLLQNKLGIKNGGAAFDVQAVCSGFAYALATADSFIRTGQHRTALVIGAEAFSRILDFKDRTTCVLFGDGAGAVVLSASEEPGILGSALHADGSYSNILCTPGNVNRGVIAGSAFLHMDGQAVFKLAVNVLEKVAVEALSKAELASEQVDWLIPHQANIRIMTSTCRKLGLPQERMIVTVDEHGNTSAASIPLALDVAVRDGRIKRGQHVLIEGVGGGFTWGASVFRF</sequence>
<feature type="chain" id="PRO_1000070220" description="Beta-ketoacyl-[acyl-carrier-protein] synthase III">
    <location>
        <begin position="1"/>
        <end position="329"/>
    </location>
</feature>
<feature type="region of interest" description="ACP-binding" evidence="1">
    <location>
        <begin position="257"/>
        <end position="261"/>
    </location>
</feature>
<feature type="active site" evidence="1">
    <location>
        <position position="123"/>
    </location>
</feature>
<feature type="active site" evidence="1">
    <location>
        <position position="256"/>
    </location>
</feature>
<feature type="active site" evidence="1">
    <location>
        <position position="286"/>
    </location>
</feature>
<dbReference type="EC" id="2.3.1.180" evidence="1"/>
<dbReference type="EMBL" id="CP000526">
    <property type="protein sequence ID" value="ABM49968.1"/>
    <property type="molecule type" value="Genomic_DNA"/>
</dbReference>
<dbReference type="RefSeq" id="WP_004191537.1">
    <property type="nucleotide sequence ID" value="NC_008785.1"/>
</dbReference>
<dbReference type="SMR" id="A1V6D0"/>
<dbReference type="KEGG" id="bmv:BMASAVP1_A2479"/>
<dbReference type="HOGENOM" id="CLU_039592_3_1_4"/>
<dbReference type="UniPathway" id="UPA00094"/>
<dbReference type="GO" id="GO:0005737">
    <property type="term" value="C:cytoplasm"/>
    <property type="evidence" value="ECO:0007669"/>
    <property type="project" value="UniProtKB-SubCell"/>
</dbReference>
<dbReference type="GO" id="GO:0004315">
    <property type="term" value="F:3-oxoacyl-[acyl-carrier-protein] synthase activity"/>
    <property type="evidence" value="ECO:0007669"/>
    <property type="project" value="InterPro"/>
</dbReference>
<dbReference type="GO" id="GO:0033818">
    <property type="term" value="F:beta-ketoacyl-acyl-carrier-protein synthase III activity"/>
    <property type="evidence" value="ECO:0007669"/>
    <property type="project" value="UniProtKB-UniRule"/>
</dbReference>
<dbReference type="GO" id="GO:0006633">
    <property type="term" value="P:fatty acid biosynthetic process"/>
    <property type="evidence" value="ECO:0007669"/>
    <property type="project" value="UniProtKB-UniRule"/>
</dbReference>
<dbReference type="CDD" id="cd00830">
    <property type="entry name" value="KAS_III"/>
    <property type="match status" value="1"/>
</dbReference>
<dbReference type="FunFam" id="3.40.47.10:FF:000004">
    <property type="entry name" value="3-oxoacyl-[acyl-carrier-protein] synthase 3"/>
    <property type="match status" value="1"/>
</dbReference>
<dbReference type="Gene3D" id="3.40.47.10">
    <property type="match status" value="1"/>
</dbReference>
<dbReference type="HAMAP" id="MF_01815">
    <property type="entry name" value="FabH"/>
    <property type="match status" value="1"/>
</dbReference>
<dbReference type="InterPro" id="IPR013747">
    <property type="entry name" value="ACP_syn_III_C"/>
</dbReference>
<dbReference type="InterPro" id="IPR013751">
    <property type="entry name" value="ACP_syn_III_N"/>
</dbReference>
<dbReference type="InterPro" id="IPR004655">
    <property type="entry name" value="FabH"/>
</dbReference>
<dbReference type="InterPro" id="IPR016039">
    <property type="entry name" value="Thiolase-like"/>
</dbReference>
<dbReference type="NCBIfam" id="TIGR00747">
    <property type="entry name" value="fabH"/>
    <property type="match status" value="1"/>
</dbReference>
<dbReference type="NCBIfam" id="NF006829">
    <property type="entry name" value="PRK09352.1"/>
    <property type="match status" value="1"/>
</dbReference>
<dbReference type="PANTHER" id="PTHR43091">
    <property type="entry name" value="3-OXOACYL-[ACYL-CARRIER-PROTEIN] SYNTHASE"/>
    <property type="match status" value="1"/>
</dbReference>
<dbReference type="PANTHER" id="PTHR43091:SF1">
    <property type="entry name" value="BETA-KETOACYL-[ACYL-CARRIER-PROTEIN] SYNTHASE III, CHLOROPLASTIC"/>
    <property type="match status" value="1"/>
</dbReference>
<dbReference type="Pfam" id="PF08545">
    <property type="entry name" value="ACP_syn_III"/>
    <property type="match status" value="1"/>
</dbReference>
<dbReference type="Pfam" id="PF08541">
    <property type="entry name" value="ACP_syn_III_C"/>
    <property type="match status" value="1"/>
</dbReference>
<dbReference type="SUPFAM" id="SSF53901">
    <property type="entry name" value="Thiolase-like"/>
    <property type="match status" value="1"/>
</dbReference>
<comment type="function">
    <text evidence="1">Catalyzes the condensation reaction of fatty acid synthesis by the addition to an acyl acceptor of two carbons from malonyl-ACP. Catalyzes the first condensation reaction which initiates fatty acid synthesis and may therefore play a role in governing the total rate of fatty acid production. Possesses both acetoacetyl-ACP synthase and acetyl transacylase activities. Its substrate specificity determines the biosynthesis of branched-chain and/or straight-chain of fatty acids.</text>
</comment>
<comment type="catalytic activity">
    <reaction evidence="1">
        <text>malonyl-[ACP] + acetyl-CoA + H(+) = 3-oxobutanoyl-[ACP] + CO2 + CoA</text>
        <dbReference type="Rhea" id="RHEA:12080"/>
        <dbReference type="Rhea" id="RHEA-COMP:9623"/>
        <dbReference type="Rhea" id="RHEA-COMP:9625"/>
        <dbReference type="ChEBI" id="CHEBI:15378"/>
        <dbReference type="ChEBI" id="CHEBI:16526"/>
        <dbReference type="ChEBI" id="CHEBI:57287"/>
        <dbReference type="ChEBI" id="CHEBI:57288"/>
        <dbReference type="ChEBI" id="CHEBI:78449"/>
        <dbReference type="ChEBI" id="CHEBI:78450"/>
        <dbReference type="EC" id="2.3.1.180"/>
    </reaction>
</comment>
<comment type="pathway">
    <text evidence="1">Lipid metabolism; fatty acid biosynthesis.</text>
</comment>
<comment type="subunit">
    <text evidence="1">Homodimer.</text>
</comment>
<comment type="subcellular location">
    <subcellularLocation>
        <location evidence="1">Cytoplasm</location>
    </subcellularLocation>
</comment>
<comment type="domain">
    <text evidence="1">The last Arg residue of the ACP-binding site is essential for the weak association between ACP/AcpP and FabH.</text>
</comment>
<comment type="similarity">
    <text evidence="1">Belongs to the thiolase-like superfamily. FabH family.</text>
</comment>
<keyword id="KW-0012">Acyltransferase</keyword>
<keyword id="KW-0963">Cytoplasm</keyword>
<keyword id="KW-0275">Fatty acid biosynthesis</keyword>
<keyword id="KW-0276">Fatty acid metabolism</keyword>
<keyword id="KW-0444">Lipid biosynthesis</keyword>
<keyword id="KW-0443">Lipid metabolism</keyword>
<keyword id="KW-0511">Multifunctional enzyme</keyword>
<keyword id="KW-0808">Transferase</keyword>
<protein>
    <recommendedName>
        <fullName evidence="1">Beta-ketoacyl-[acyl-carrier-protein] synthase III</fullName>
        <shortName evidence="1">Beta-ketoacyl-ACP synthase III</shortName>
        <shortName evidence="1">KAS III</shortName>
        <ecNumber evidence="1">2.3.1.180</ecNumber>
    </recommendedName>
    <alternativeName>
        <fullName evidence="1">3-oxoacyl-[acyl-carrier-protein] synthase 3</fullName>
    </alternativeName>
    <alternativeName>
        <fullName evidence="1">3-oxoacyl-[acyl-carrier-protein] synthase III</fullName>
    </alternativeName>
</protein>
<proteinExistence type="inferred from homology"/>
<name>FABH_BURMS</name>
<evidence type="ECO:0000255" key="1">
    <source>
        <dbReference type="HAMAP-Rule" id="MF_01815"/>
    </source>
</evidence>
<organism>
    <name type="scientific">Burkholderia mallei (strain SAVP1)</name>
    <dbReference type="NCBI Taxonomy" id="320388"/>
    <lineage>
        <taxon>Bacteria</taxon>
        <taxon>Pseudomonadati</taxon>
        <taxon>Pseudomonadota</taxon>
        <taxon>Betaproteobacteria</taxon>
        <taxon>Burkholderiales</taxon>
        <taxon>Burkholderiaceae</taxon>
        <taxon>Burkholderia</taxon>
        <taxon>pseudomallei group</taxon>
    </lineage>
</organism>